<dbReference type="EMBL" id="CU928145">
    <property type="protein sequence ID" value="CAV00816.1"/>
    <property type="molecule type" value="Genomic_DNA"/>
</dbReference>
<dbReference type="RefSeq" id="WP_001251965.1">
    <property type="nucleotide sequence ID" value="NZ_CP028304.1"/>
</dbReference>
<dbReference type="SMR" id="B7L881"/>
<dbReference type="KEGG" id="eck:EC55989_4206"/>
<dbReference type="HOGENOM" id="CLU_084338_2_0_6"/>
<dbReference type="Proteomes" id="UP000000746">
    <property type="component" value="Chromosome"/>
</dbReference>
<dbReference type="GO" id="GO:0005886">
    <property type="term" value="C:plasma membrane"/>
    <property type="evidence" value="ECO:0007669"/>
    <property type="project" value="UniProtKB-SubCell"/>
</dbReference>
<dbReference type="GO" id="GO:0045259">
    <property type="term" value="C:proton-transporting ATP synthase complex"/>
    <property type="evidence" value="ECO:0007669"/>
    <property type="project" value="UniProtKB-KW"/>
</dbReference>
<dbReference type="GO" id="GO:0005524">
    <property type="term" value="F:ATP binding"/>
    <property type="evidence" value="ECO:0007669"/>
    <property type="project" value="UniProtKB-UniRule"/>
</dbReference>
<dbReference type="GO" id="GO:0046933">
    <property type="term" value="F:proton-transporting ATP synthase activity, rotational mechanism"/>
    <property type="evidence" value="ECO:0007669"/>
    <property type="project" value="UniProtKB-UniRule"/>
</dbReference>
<dbReference type="CDD" id="cd12152">
    <property type="entry name" value="F1-ATPase_delta"/>
    <property type="match status" value="1"/>
</dbReference>
<dbReference type="FunFam" id="1.20.5.440:FF:000001">
    <property type="entry name" value="ATP synthase epsilon chain"/>
    <property type="match status" value="1"/>
</dbReference>
<dbReference type="FunFam" id="2.60.15.10:FF:000001">
    <property type="entry name" value="ATP synthase epsilon chain"/>
    <property type="match status" value="1"/>
</dbReference>
<dbReference type="Gene3D" id="1.20.5.440">
    <property type="entry name" value="ATP synthase delta/epsilon subunit, C-terminal domain"/>
    <property type="match status" value="1"/>
</dbReference>
<dbReference type="Gene3D" id="2.60.15.10">
    <property type="entry name" value="F0F1 ATP synthase delta/epsilon subunit, N-terminal"/>
    <property type="match status" value="1"/>
</dbReference>
<dbReference type="HAMAP" id="MF_00530">
    <property type="entry name" value="ATP_synth_epsil_bac"/>
    <property type="match status" value="1"/>
</dbReference>
<dbReference type="InterPro" id="IPR036794">
    <property type="entry name" value="ATP_F1_dsu/esu_C_sf"/>
</dbReference>
<dbReference type="InterPro" id="IPR001469">
    <property type="entry name" value="ATP_synth_F1_dsu/esu"/>
</dbReference>
<dbReference type="InterPro" id="IPR020546">
    <property type="entry name" value="ATP_synth_F1_dsu/esu_N"/>
</dbReference>
<dbReference type="InterPro" id="IPR020547">
    <property type="entry name" value="ATP_synth_F1_esu_C"/>
</dbReference>
<dbReference type="InterPro" id="IPR036771">
    <property type="entry name" value="ATPsynth_dsu/esu_N"/>
</dbReference>
<dbReference type="NCBIfam" id="TIGR01216">
    <property type="entry name" value="ATP_synt_epsi"/>
    <property type="match status" value="1"/>
</dbReference>
<dbReference type="NCBIfam" id="NF001847">
    <property type="entry name" value="PRK00571.1-4"/>
    <property type="match status" value="1"/>
</dbReference>
<dbReference type="PANTHER" id="PTHR13822">
    <property type="entry name" value="ATP SYNTHASE DELTA/EPSILON CHAIN"/>
    <property type="match status" value="1"/>
</dbReference>
<dbReference type="PANTHER" id="PTHR13822:SF10">
    <property type="entry name" value="ATP SYNTHASE EPSILON CHAIN, CHLOROPLASTIC"/>
    <property type="match status" value="1"/>
</dbReference>
<dbReference type="Pfam" id="PF00401">
    <property type="entry name" value="ATP-synt_DE"/>
    <property type="match status" value="1"/>
</dbReference>
<dbReference type="Pfam" id="PF02823">
    <property type="entry name" value="ATP-synt_DE_N"/>
    <property type="match status" value="1"/>
</dbReference>
<dbReference type="SUPFAM" id="SSF46604">
    <property type="entry name" value="Epsilon subunit of F1F0-ATP synthase C-terminal domain"/>
    <property type="match status" value="1"/>
</dbReference>
<dbReference type="SUPFAM" id="SSF51344">
    <property type="entry name" value="Epsilon subunit of F1F0-ATP synthase N-terminal domain"/>
    <property type="match status" value="1"/>
</dbReference>
<reference key="1">
    <citation type="journal article" date="2009" name="PLoS Genet.">
        <title>Organised genome dynamics in the Escherichia coli species results in highly diverse adaptive paths.</title>
        <authorList>
            <person name="Touchon M."/>
            <person name="Hoede C."/>
            <person name="Tenaillon O."/>
            <person name="Barbe V."/>
            <person name="Baeriswyl S."/>
            <person name="Bidet P."/>
            <person name="Bingen E."/>
            <person name="Bonacorsi S."/>
            <person name="Bouchier C."/>
            <person name="Bouvet O."/>
            <person name="Calteau A."/>
            <person name="Chiapello H."/>
            <person name="Clermont O."/>
            <person name="Cruveiller S."/>
            <person name="Danchin A."/>
            <person name="Diard M."/>
            <person name="Dossat C."/>
            <person name="Karoui M.E."/>
            <person name="Frapy E."/>
            <person name="Garry L."/>
            <person name="Ghigo J.M."/>
            <person name="Gilles A.M."/>
            <person name="Johnson J."/>
            <person name="Le Bouguenec C."/>
            <person name="Lescat M."/>
            <person name="Mangenot S."/>
            <person name="Martinez-Jehanne V."/>
            <person name="Matic I."/>
            <person name="Nassif X."/>
            <person name="Oztas S."/>
            <person name="Petit M.A."/>
            <person name="Pichon C."/>
            <person name="Rouy Z."/>
            <person name="Ruf C.S."/>
            <person name="Schneider D."/>
            <person name="Tourret J."/>
            <person name="Vacherie B."/>
            <person name="Vallenet D."/>
            <person name="Medigue C."/>
            <person name="Rocha E.P.C."/>
            <person name="Denamur E."/>
        </authorList>
    </citation>
    <scope>NUCLEOTIDE SEQUENCE [LARGE SCALE GENOMIC DNA]</scope>
    <source>
        <strain>55989 / EAEC</strain>
    </source>
</reference>
<accession>B7L881</accession>
<evidence type="ECO:0000255" key="1">
    <source>
        <dbReference type="HAMAP-Rule" id="MF_00530"/>
    </source>
</evidence>
<sequence>MAMTYHLDVVSAEQQMFSGLVEKIQVTGSEGELGIYPGHAPLLTAIKPGMIRIVKQHGHEEFIYLSGGILEVQPGNVTVLADTAIRGQDLDEARAMEAKRKAEEHISSSHGDVDYAQASAELAKAIAQLRVIELTKKAM</sequence>
<feature type="chain" id="PRO_1000146328" description="ATP synthase epsilon chain">
    <location>
        <begin position="1"/>
        <end position="139"/>
    </location>
</feature>
<gene>
    <name evidence="1" type="primary">atpC</name>
    <name type="ordered locus">EC55989_4206</name>
</gene>
<name>ATPE_ECO55</name>
<comment type="function">
    <text evidence="1">Produces ATP from ADP in the presence of a proton gradient across the membrane.</text>
</comment>
<comment type="subunit">
    <text evidence="1">F-type ATPases have 2 components, CF(1) - the catalytic core - and CF(0) - the membrane proton channel. CF(1) has five subunits: alpha(3), beta(3), gamma(1), delta(1), epsilon(1). CF(0) has three main subunits: a, b and c.</text>
</comment>
<comment type="subcellular location">
    <subcellularLocation>
        <location evidence="1">Cell inner membrane</location>
        <topology evidence="1">Peripheral membrane protein</topology>
    </subcellularLocation>
</comment>
<comment type="similarity">
    <text evidence="1">Belongs to the ATPase epsilon chain family.</text>
</comment>
<proteinExistence type="inferred from homology"/>
<keyword id="KW-0066">ATP synthesis</keyword>
<keyword id="KW-0997">Cell inner membrane</keyword>
<keyword id="KW-1003">Cell membrane</keyword>
<keyword id="KW-0139">CF(1)</keyword>
<keyword id="KW-0375">Hydrogen ion transport</keyword>
<keyword id="KW-0406">Ion transport</keyword>
<keyword id="KW-0472">Membrane</keyword>
<keyword id="KW-1185">Reference proteome</keyword>
<keyword id="KW-0813">Transport</keyword>
<protein>
    <recommendedName>
        <fullName evidence="1">ATP synthase epsilon chain</fullName>
    </recommendedName>
    <alternativeName>
        <fullName evidence="1">ATP synthase F1 sector epsilon subunit</fullName>
    </alternativeName>
    <alternativeName>
        <fullName evidence="1">F-ATPase epsilon subunit</fullName>
    </alternativeName>
</protein>
<organism>
    <name type="scientific">Escherichia coli (strain 55989 / EAEC)</name>
    <dbReference type="NCBI Taxonomy" id="585055"/>
    <lineage>
        <taxon>Bacteria</taxon>
        <taxon>Pseudomonadati</taxon>
        <taxon>Pseudomonadota</taxon>
        <taxon>Gammaproteobacteria</taxon>
        <taxon>Enterobacterales</taxon>
        <taxon>Enterobacteriaceae</taxon>
        <taxon>Escherichia</taxon>
    </lineage>
</organism>